<reference key="1">
    <citation type="journal article" date="2006" name="Proc. Natl. Acad. Sci. U.S.A.">
        <title>Burkholderia xenovorans LB400 harbors a multi-replicon, 9.73-Mbp genome shaped for versatility.</title>
        <authorList>
            <person name="Chain P.S.G."/>
            <person name="Denef V.J."/>
            <person name="Konstantinidis K.T."/>
            <person name="Vergez L.M."/>
            <person name="Agullo L."/>
            <person name="Reyes V.L."/>
            <person name="Hauser L."/>
            <person name="Cordova M."/>
            <person name="Gomez L."/>
            <person name="Gonzalez M."/>
            <person name="Land M."/>
            <person name="Lao V."/>
            <person name="Larimer F."/>
            <person name="LiPuma J.J."/>
            <person name="Mahenthiralingam E."/>
            <person name="Malfatti S.A."/>
            <person name="Marx C.J."/>
            <person name="Parnell J.J."/>
            <person name="Ramette A."/>
            <person name="Richardson P."/>
            <person name="Seeger M."/>
            <person name="Smith D."/>
            <person name="Spilker T."/>
            <person name="Sul W.J."/>
            <person name="Tsoi T.V."/>
            <person name="Ulrich L.E."/>
            <person name="Zhulin I.B."/>
            <person name="Tiedje J.M."/>
        </authorList>
    </citation>
    <scope>NUCLEOTIDE SEQUENCE [LARGE SCALE GENOMIC DNA]</scope>
    <source>
        <strain>LB400</strain>
    </source>
</reference>
<sequence length="156" mass="17610">MPRRREVPKREVLPDPKFGNVDVAKFMNVLMLSGKKSVAERIVYGAFEQIQTKGGKDPLEVFTVALNNVKPVVEVKSRRVGGANYQVPVEVRPSRRMALAMRWLREAAKKRSEKSMALRLAGELSEAAEGRGGAMKKRDEVHRMAEANKAFSHFRF</sequence>
<keyword id="KW-1185">Reference proteome</keyword>
<keyword id="KW-0687">Ribonucleoprotein</keyword>
<keyword id="KW-0689">Ribosomal protein</keyword>
<keyword id="KW-0694">RNA-binding</keyword>
<keyword id="KW-0699">rRNA-binding</keyword>
<keyword id="KW-0820">tRNA-binding</keyword>
<feature type="chain" id="PRO_1000014163" description="Small ribosomal subunit protein uS7">
    <location>
        <begin position="1"/>
        <end position="156"/>
    </location>
</feature>
<proteinExistence type="inferred from homology"/>
<comment type="function">
    <text evidence="1">One of the primary rRNA binding proteins, it binds directly to 16S rRNA where it nucleates assembly of the head domain of the 30S subunit. Is located at the subunit interface close to the decoding center, probably blocks exit of the E-site tRNA.</text>
</comment>
<comment type="subunit">
    <text evidence="1">Part of the 30S ribosomal subunit. Contacts proteins S9 and S11.</text>
</comment>
<comment type="similarity">
    <text evidence="1">Belongs to the universal ribosomal protein uS7 family.</text>
</comment>
<protein>
    <recommendedName>
        <fullName evidence="1">Small ribosomal subunit protein uS7</fullName>
    </recommendedName>
    <alternativeName>
        <fullName evidence="2">30S ribosomal protein S7</fullName>
    </alternativeName>
</protein>
<gene>
    <name evidence="1" type="primary">rpsG</name>
    <name type="ordered locus">Bxeno_A4085</name>
    <name type="ORF">Bxe_A0310</name>
</gene>
<dbReference type="EMBL" id="CP000270">
    <property type="protein sequence ID" value="ABE32623.1"/>
    <property type="molecule type" value="Genomic_DNA"/>
</dbReference>
<dbReference type="RefSeq" id="WP_006053291.1">
    <property type="nucleotide sequence ID" value="NZ_CP008760.1"/>
</dbReference>
<dbReference type="SMR" id="Q13TG6"/>
<dbReference type="STRING" id="266265.Bxe_A0310"/>
<dbReference type="GeneID" id="97311162"/>
<dbReference type="KEGG" id="bxb:DR64_2480"/>
<dbReference type="KEGG" id="bxe:Bxe_A0310"/>
<dbReference type="eggNOG" id="COG0049">
    <property type="taxonomic scope" value="Bacteria"/>
</dbReference>
<dbReference type="OrthoDB" id="9807653at2"/>
<dbReference type="Proteomes" id="UP000001817">
    <property type="component" value="Chromosome 1"/>
</dbReference>
<dbReference type="GO" id="GO:0015935">
    <property type="term" value="C:small ribosomal subunit"/>
    <property type="evidence" value="ECO:0007669"/>
    <property type="project" value="InterPro"/>
</dbReference>
<dbReference type="GO" id="GO:0019843">
    <property type="term" value="F:rRNA binding"/>
    <property type="evidence" value="ECO:0007669"/>
    <property type="project" value="UniProtKB-UniRule"/>
</dbReference>
<dbReference type="GO" id="GO:0003735">
    <property type="term" value="F:structural constituent of ribosome"/>
    <property type="evidence" value="ECO:0007669"/>
    <property type="project" value="InterPro"/>
</dbReference>
<dbReference type="GO" id="GO:0000049">
    <property type="term" value="F:tRNA binding"/>
    <property type="evidence" value="ECO:0007669"/>
    <property type="project" value="UniProtKB-UniRule"/>
</dbReference>
<dbReference type="GO" id="GO:0006412">
    <property type="term" value="P:translation"/>
    <property type="evidence" value="ECO:0007669"/>
    <property type="project" value="UniProtKB-UniRule"/>
</dbReference>
<dbReference type="CDD" id="cd14869">
    <property type="entry name" value="uS7_Bacteria"/>
    <property type="match status" value="1"/>
</dbReference>
<dbReference type="FunFam" id="1.10.455.10:FF:000001">
    <property type="entry name" value="30S ribosomal protein S7"/>
    <property type="match status" value="1"/>
</dbReference>
<dbReference type="Gene3D" id="1.10.455.10">
    <property type="entry name" value="Ribosomal protein S7 domain"/>
    <property type="match status" value="1"/>
</dbReference>
<dbReference type="HAMAP" id="MF_00480_B">
    <property type="entry name" value="Ribosomal_uS7_B"/>
    <property type="match status" value="1"/>
</dbReference>
<dbReference type="InterPro" id="IPR000235">
    <property type="entry name" value="Ribosomal_uS7"/>
</dbReference>
<dbReference type="InterPro" id="IPR005717">
    <property type="entry name" value="Ribosomal_uS7_bac/org-type"/>
</dbReference>
<dbReference type="InterPro" id="IPR020606">
    <property type="entry name" value="Ribosomal_uS7_CS"/>
</dbReference>
<dbReference type="InterPro" id="IPR023798">
    <property type="entry name" value="Ribosomal_uS7_dom"/>
</dbReference>
<dbReference type="InterPro" id="IPR036823">
    <property type="entry name" value="Ribosomal_uS7_dom_sf"/>
</dbReference>
<dbReference type="NCBIfam" id="TIGR01029">
    <property type="entry name" value="rpsG_bact"/>
    <property type="match status" value="1"/>
</dbReference>
<dbReference type="PANTHER" id="PTHR11205">
    <property type="entry name" value="RIBOSOMAL PROTEIN S7"/>
    <property type="match status" value="1"/>
</dbReference>
<dbReference type="Pfam" id="PF00177">
    <property type="entry name" value="Ribosomal_S7"/>
    <property type="match status" value="1"/>
</dbReference>
<dbReference type="PIRSF" id="PIRSF002122">
    <property type="entry name" value="RPS7p_RPS7a_RPS5e_RPS7o"/>
    <property type="match status" value="1"/>
</dbReference>
<dbReference type="SUPFAM" id="SSF47973">
    <property type="entry name" value="Ribosomal protein S7"/>
    <property type="match status" value="1"/>
</dbReference>
<dbReference type="PROSITE" id="PS00052">
    <property type="entry name" value="RIBOSOMAL_S7"/>
    <property type="match status" value="1"/>
</dbReference>
<evidence type="ECO:0000255" key="1">
    <source>
        <dbReference type="HAMAP-Rule" id="MF_00480"/>
    </source>
</evidence>
<evidence type="ECO:0000305" key="2"/>
<accession>Q13TG6</accession>
<name>RS7_PARXL</name>
<organism>
    <name type="scientific">Paraburkholderia xenovorans (strain LB400)</name>
    <dbReference type="NCBI Taxonomy" id="266265"/>
    <lineage>
        <taxon>Bacteria</taxon>
        <taxon>Pseudomonadati</taxon>
        <taxon>Pseudomonadota</taxon>
        <taxon>Betaproteobacteria</taxon>
        <taxon>Burkholderiales</taxon>
        <taxon>Burkholderiaceae</taxon>
        <taxon>Paraburkholderia</taxon>
    </lineage>
</organism>